<sequence>MRSCRSCNVRVLVAIVCGLLTGIVLGLGIWRMVIRINRGIFVPVPSIPVQFCRNGGTWQNGRCICTEEWKGLRCTIANFCENSTDGEFTFGSIPVGRYGPSLQTCEPGTLNAGSPKATRLCNVSEFGNIELQNVTKGSCNINLQTLEIQINNQTASAENISREAQVLTADASKLTAQNITSATTVVGQIFGKANNESQAKKTAIATVSQILDASEDVFQKAAEMDNSKSFSNLIKQMENYSYSQGDQTVVEPNIAIQSVTRDDNSGPSVLFSVQKGSSNSLVSGRILINKTANGLNPDGQTELQILLNTGENRKSCGFMVYQNHKLFQSKTFTATSDFSQKIISSKINESEQQRQNKVSVEMVFNPTYDKRELRLHSYACVYWNFLINDWDTQGCQKTGNTTEFLRCNCSHTTNFAVLMSFKKDYKYPKSLDILSNIGCALSIAGLALTILFQILTRKIRKTSVTWVLVSLCSSMLIFNLLFVFGIENSNKNLKTSDSDINVKPENNKIPESDTIETPNPSCTAIAALLHYFLLVTFTWNGLSATQLYFLLIRTMKPLPRHFIIFISLVGWGVPAIIVGVTIGSIYALSGNKRYWELDYRQEEICWLAVPKDNDYARSPLLWSFIIPVTIILITNITIFVIITVKVLWKNNQNLTSTKKVSSLKKVFSTLSIAVVFGVTWILAYAMLISNDDIRIVFSYIFCLFNTTQGLQIFILYTVRTKVFQSEASKILKSLSSSFDRTKPMPSITPLKLRVRMYNMLRSLPSLNERFRLLEPSGMTEETSLS</sequence>
<evidence type="ECO:0000255" key="1"/>
<evidence type="ECO:0000255" key="2">
    <source>
        <dbReference type="PROSITE-ProRule" id="PRU00098"/>
    </source>
</evidence>
<evidence type="ECO:0000269" key="3">
    <source>
    </source>
</evidence>
<evidence type="ECO:0000305" key="4"/>
<organism>
    <name type="scientific">Mus musculus</name>
    <name type="common">Mouse</name>
    <dbReference type="NCBI Taxonomy" id="10090"/>
    <lineage>
        <taxon>Eukaryota</taxon>
        <taxon>Metazoa</taxon>
        <taxon>Chordata</taxon>
        <taxon>Craniata</taxon>
        <taxon>Vertebrata</taxon>
        <taxon>Euteleostomi</taxon>
        <taxon>Mammalia</taxon>
        <taxon>Eutheria</taxon>
        <taxon>Euarchontoglires</taxon>
        <taxon>Glires</taxon>
        <taxon>Rodentia</taxon>
        <taxon>Myomorpha</taxon>
        <taxon>Muroidea</taxon>
        <taxon>Muridae</taxon>
        <taxon>Murinae</taxon>
        <taxon>Mus</taxon>
        <taxon>Mus</taxon>
    </lineage>
</organism>
<name>AGRG7_MOUSE</name>
<keyword id="KW-0903">Direct protein sequencing</keyword>
<keyword id="KW-1015">Disulfide bond</keyword>
<keyword id="KW-0297">G-protein coupled receptor</keyword>
<keyword id="KW-0325">Glycoprotein</keyword>
<keyword id="KW-0472">Membrane</keyword>
<keyword id="KW-0675">Receptor</keyword>
<keyword id="KW-1185">Reference proteome</keyword>
<keyword id="KW-0732">Signal</keyword>
<keyword id="KW-0807">Transducer</keyword>
<keyword id="KW-0812">Transmembrane</keyword>
<keyword id="KW-1133">Transmembrane helix</keyword>
<proteinExistence type="evidence at protein level"/>
<reference key="1">
    <citation type="journal article" date="2005" name="Science">
        <title>The transcriptional landscape of the mammalian genome.</title>
        <authorList>
            <person name="Carninci P."/>
            <person name="Kasukawa T."/>
            <person name="Katayama S."/>
            <person name="Gough J."/>
            <person name="Frith M.C."/>
            <person name="Maeda N."/>
            <person name="Oyama R."/>
            <person name="Ravasi T."/>
            <person name="Lenhard B."/>
            <person name="Wells C."/>
            <person name="Kodzius R."/>
            <person name="Shimokawa K."/>
            <person name="Bajic V.B."/>
            <person name="Brenner S.E."/>
            <person name="Batalov S."/>
            <person name="Forrest A.R."/>
            <person name="Zavolan M."/>
            <person name="Davis M.J."/>
            <person name="Wilming L.G."/>
            <person name="Aidinis V."/>
            <person name="Allen J.E."/>
            <person name="Ambesi-Impiombato A."/>
            <person name="Apweiler R."/>
            <person name="Aturaliya R.N."/>
            <person name="Bailey T.L."/>
            <person name="Bansal M."/>
            <person name="Baxter L."/>
            <person name="Beisel K.W."/>
            <person name="Bersano T."/>
            <person name="Bono H."/>
            <person name="Chalk A.M."/>
            <person name="Chiu K.P."/>
            <person name="Choudhary V."/>
            <person name="Christoffels A."/>
            <person name="Clutterbuck D.R."/>
            <person name="Crowe M.L."/>
            <person name="Dalla E."/>
            <person name="Dalrymple B.P."/>
            <person name="de Bono B."/>
            <person name="Della Gatta G."/>
            <person name="di Bernardo D."/>
            <person name="Down T."/>
            <person name="Engstrom P."/>
            <person name="Fagiolini M."/>
            <person name="Faulkner G."/>
            <person name="Fletcher C.F."/>
            <person name="Fukushima T."/>
            <person name="Furuno M."/>
            <person name="Futaki S."/>
            <person name="Gariboldi M."/>
            <person name="Georgii-Hemming P."/>
            <person name="Gingeras T.R."/>
            <person name="Gojobori T."/>
            <person name="Green R.E."/>
            <person name="Gustincich S."/>
            <person name="Harbers M."/>
            <person name="Hayashi Y."/>
            <person name="Hensch T.K."/>
            <person name="Hirokawa N."/>
            <person name="Hill D."/>
            <person name="Huminiecki L."/>
            <person name="Iacono M."/>
            <person name="Ikeo K."/>
            <person name="Iwama A."/>
            <person name="Ishikawa T."/>
            <person name="Jakt M."/>
            <person name="Kanapin A."/>
            <person name="Katoh M."/>
            <person name="Kawasawa Y."/>
            <person name="Kelso J."/>
            <person name="Kitamura H."/>
            <person name="Kitano H."/>
            <person name="Kollias G."/>
            <person name="Krishnan S.P."/>
            <person name="Kruger A."/>
            <person name="Kummerfeld S.K."/>
            <person name="Kurochkin I.V."/>
            <person name="Lareau L.F."/>
            <person name="Lazarevic D."/>
            <person name="Lipovich L."/>
            <person name="Liu J."/>
            <person name="Liuni S."/>
            <person name="McWilliam S."/>
            <person name="Madan Babu M."/>
            <person name="Madera M."/>
            <person name="Marchionni L."/>
            <person name="Matsuda H."/>
            <person name="Matsuzawa S."/>
            <person name="Miki H."/>
            <person name="Mignone F."/>
            <person name="Miyake S."/>
            <person name="Morris K."/>
            <person name="Mottagui-Tabar S."/>
            <person name="Mulder N."/>
            <person name="Nakano N."/>
            <person name="Nakauchi H."/>
            <person name="Ng P."/>
            <person name="Nilsson R."/>
            <person name="Nishiguchi S."/>
            <person name="Nishikawa S."/>
            <person name="Nori F."/>
            <person name="Ohara O."/>
            <person name="Okazaki Y."/>
            <person name="Orlando V."/>
            <person name="Pang K.C."/>
            <person name="Pavan W.J."/>
            <person name="Pavesi G."/>
            <person name="Pesole G."/>
            <person name="Petrovsky N."/>
            <person name="Piazza S."/>
            <person name="Reed J."/>
            <person name="Reid J.F."/>
            <person name="Ring B.Z."/>
            <person name="Ringwald M."/>
            <person name="Rost B."/>
            <person name="Ruan Y."/>
            <person name="Salzberg S.L."/>
            <person name="Sandelin A."/>
            <person name="Schneider C."/>
            <person name="Schoenbach C."/>
            <person name="Sekiguchi K."/>
            <person name="Semple C.A."/>
            <person name="Seno S."/>
            <person name="Sessa L."/>
            <person name="Sheng Y."/>
            <person name="Shibata Y."/>
            <person name="Shimada H."/>
            <person name="Shimada K."/>
            <person name="Silva D."/>
            <person name="Sinclair B."/>
            <person name="Sperling S."/>
            <person name="Stupka E."/>
            <person name="Sugiura K."/>
            <person name="Sultana R."/>
            <person name="Takenaka Y."/>
            <person name="Taki K."/>
            <person name="Tammoja K."/>
            <person name="Tan S.L."/>
            <person name="Tang S."/>
            <person name="Taylor M.S."/>
            <person name="Tegner J."/>
            <person name="Teichmann S.A."/>
            <person name="Ueda H.R."/>
            <person name="van Nimwegen E."/>
            <person name="Verardo R."/>
            <person name="Wei C.L."/>
            <person name="Yagi K."/>
            <person name="Yamanishi H."/>
            <person name="Zabarovsky E."/>
            <person name="Zhu S."/>
            <person name="Zimmer A."/>
            <person name="Hide W."/>
            <person name="Bult C."/>
            <person name="Grimmond S.M."/>
            <person name="Teasdale R.D."/>
            <person name="Liu E.T."/>
            <person name="Brusic V."/>
            <person name="Quackenbush J."/>
            <person name="Wahlestedt C."/>
            <person name="Mattick J.S."/>
            <person name="Hume D.A."/>
            <person name="Kai C."/>
            <person name="Sasaki D."/>
            <person name="Tomaru Y."/>
            <person name="Fukuda S."/>
            <person name="Kanamori-Katayama M."/>
            <person name="Suzuki M."/>
            <person name="Aoki J."/>
            <person name="Arakawa T."/>
            <person name="Iida J."/>
            <person name="Imamura K."/>
            <person name="Itoh M."/>
            <person name="Kato T."/>
            <person name="Kawaji H."/>
            <person name="Kawagashira N."/>
            <person name="Kawashima T."/>
            <person name="Kojima M."/>
            <person name="Kondo S."/>
            <person name="Konno H."/>
            <person name="Nakano K."/>
            <person name="Ninomiya N."/>
            <person name="Nishio T."/>
            <person name="Okada M."/>
            <person name="Plessy C."/>
            <person name="Shibata K."/>
            <person name="Shiraki T."/>
            <person name="Suzuki S."/>
            <person name="Tagami M."/>
            <person name="Waki K."/>
            <person name="Watahiki A."/>
            <person name="Okamura-Oho Y."/>
            <person name="Suzuki H."/>
            <person name="Kawai J."/>
            <person name="Hayashizaki Y."/>
        </authorList>
    </citation>
    <scope>NUCLEOTIDE SEQUENCE [LARGE SCALE MRNA]</scope>
    <source>
        <strain>C57BL/6J</strain>
        <tissue>Cecum</tissue>
    </source>
</reference>
<reference key="2">
    <citation type="journal article" date="2009" name="PLoS Biol.">
        <title>Lineage-specific biology revealed by a finished genome assembly of the mouse.</title>
        <authorList>
            <person name="Church D.M."/>
            <person name="Goodstadt L."/>
            <person name="Hillier L.W."/>
            <person name="Zody M.C."/>
            <person name="Goldstein S."/>
            <person name="She X."/>
            <person name="Bult C.J."/>
            <person name="Agarwala R."/>
            <person name="Cherry J.L."/>
            <person name="DiCuccio M."/>
            <person name="Hlavina W."/>
            <person name="Kapustin Y."/>
            <person name="Meric P."/>
            <person name="Maglott D."/>
            <person name="Birtle Z."/>
            <person name="Marques A.C."/>
            <person name="Graves T."/>
            <person name="Zhou S."/>
            <person name="Teague B."/>
            <person name="Potamousis K."/>
            <person name="Churas C."/>
            <person name="Place M."/>
            <person name="Herschleb J."/>
            <person name="Runnheim R."/>
            <person name="Forrest D."/>
            <person name="Amos-Landgraf J."/>
            <person name="Schwartz D.C."/>
            <person name="Cheng Z."/>
            <person name="Lindblad-Toh K."/>
            <person name="Eichler E.E."/>
            <person name="Ponting C.P."/>
        </authorList>
    </citation>
    <scope>NUCLEOTIDE SEQUENCE [LARGE SCALE GENOMIC DNA]</scope>
    <source>
        <strain>C57BL/6J</strain>
    </source>
</reference>
<reference key="3">
    <citation type="submission" date="2005-07" db="EMBL/GenBank/DDBJ databases">
        <authorList>
            <person name="Mural R.J."/>
            <person name="Adams M.D."/>
            <person name="Myers E.W."/>
            <person name="Smith H.O."/>
            <person name="Venter J.C."/>
        </authorList>
    </citation>
    <scope>NUCLEOTIDE SEQUENCE [LARGE SCALE GENOMIC DNA]</scope>
</reference>
<reference key="4">
    <citation type="journal article" date="2004" name="Genome Res.">
        <title>The status, quality, and expansion of the NIH full-length cDNA project: the Mammalian Gene Collection (MGC).</title>
        <authorList>
            <consortium name="The MGC Project Team"/>
        </authorList>
    </citation>
    <scope>NUCLEOTIDE SEQUENCE [LARGE SCALE MRNA]</scope>
    <source>
        <tissue>Brain</tissue>
    </source>
</reference>
<reference key="5">
    <citation type="journal article" date="2003" name="Proc. Natl. Acad. Sci. U.S.A.">
        <title>The G protein-coupled receptor repertoires of human and mouse.</title>
        <authorList>
            <person name="Vassilatis D.K."/>
            <person name="Hohmann J.G."/>
            <person name="Zeng H."/>
            <person name="Li F."/>
            <person name="Ranchalis J.E."/>
            <person name="Mortrud M.T."/>
            <person name="Brown A."/>
            <person name="Rodriguez S.S."/>
            <person name="Weller J.R."/>
            <person name="Wright A.C."/>
            <person name="Bergmann J.E."/>
            <person name="Gaitanaris G.A."/>
        </authorList>
    </citation>
    <scope>NUCLEOTIDE SEQUENCE [LARGE SCALE MRNA] OF 8-116</scope>
</reference>
<reference key="6">
    <citation type="submission" date="2009-01" db="UniProtKB">
        <authorList>
            <person name="Lubec G."/>
            <person name="Sunyer B."/>
            <person name="Chen W.-Q."/>
        </authorList>
    </citation>
    <scope>PROTEIN SEQUENCE OF 39-53</scope>
    <scope>IDENTIFICATION BY MASS SPECTROMETRY</scope>
    <source>
        <strain>OF1</strain>
        <tissue>Hippocampus</tissue>
    </source>
</reference>
<reference key="7">
    <citation type="journal article" date="2014" name="World J. Gastroenterol.">
        <title>Deletion of Gpr128 results in weight loss and increased intestinal contraction frequency.</title>
        <authorList>
            <person name="Ni Y.Y."/>
            <person name="Chen Y."/>
            <person name="Lu S.Y."/>
            <person name="Sun B.Y."/>
            <person name="Wang F."/>
            <person name="Wu X.L."/>
            <person name="Dang S.Y."/>
            <person name="Zhang G.H."/>
            <person name="Zhang H.X."/>
            <person name="Kuang Y."/>
            <person name="Fei J."/>
            <person name="Gu M.M."/>
            <person name="Rong W.F."/>
            <person name="Wang Z.G."/>
        </authorList>
    </citation>
    <scope>DISRUPTION PHENOTYPE</scope>
    <scope>TISSUE SPECIFICITY</scope>
</reference>
<accession>Q8BM96</accession>
<accession>A2RSY9</accession>
<accession>Q80T42</accession>
<gene>
    <name type="primary">Adgrg7</name>
    <name type="synonym">Gpr128</name>
</gene>
<comment type="function">
    <text>Orphan receptor.</text>
</comment>
<comment type="subcellular location">
    <subcellularLocation>
        <location evidence="1">Membrane</location>
        <topology evidence="1">Multi-pass membrane protein</topology>
    </subcellularLocation>
</comment>
<comment type="tissue specificity">
    <text evidence="3">Selectively expressed in the intestinal tissues.</text>
</comment>
<comment type="disruption phenotype">
    <text evidence="3">Deficient mice exhibit less body weight gain and an increase in intestinal contraction frequency.</text>
</comment>
<comment type="similarity">
    <text evidence="4">Belongs to the G-protein coupled receptor 2 family. Adhesion G-protein coupled receptor (ADGR) subfamily.</text>
</comment>
<dbReference type="EMBL" id="AK033593">
    <property type="protein sequence ID" value="BAC28377.1"/>
    <property type="molecule type" value="mRNA"/>
</dbReference>
<dbReference type="EMBL" id="CT025158">
    <property type="status" value="NOT_ANNOTATED_CDS"/>
    <property type="molecule type" value="Genomic_DNA"/>
</dbReference>
<dbReference type="EMBL" id="CH466521">
    <property type="protein sequence ID" value="EDK98164.1"/>
    <property type="molecule type" value="Genomic_DNA"/>
</dbReference>
<dbReference type="EMBL" id="BC132302">
    <property type="protein sequence ID" value="AAI32303.1"/>
    <property type="molecule type" value="mRNA"/>
</dbReference>
<dbReference type="EMBL" id="BC137963">
    <property type="protein sequence ID" value="AAI37964.1"/>
    <property type="molecule type" value="mRNA"/>
</dbReference>
<dbReference type="EMBL" id="AY255604">
    <property type="protein sequence ID" value="AAO85116.1"/>
    <property type="molecule type" value="mRNA"/>
</dbReference>
<dbReference type="CCDS" id="CCDS28225.1"/>
<dbReference type="RefSeq" id="NP_766413.2">
    <property type="nucleotide sequence ID" value="NM_172825.3"/>
</dbReference>
<dbReference type="SMR" id="Q8BM96"/>
<dbReference type="FunCoup" id="Q8BM96">
    <property type="interactions" value="1"/>
</dbReference>
<dbReference type="STRING" id="10090.ENSMUSP00000023437"/>
<dbReference type="MEROPS" id="P02.031"/>
<dbReference type="GlyCosmos" id="Q8BM96">
    <property type="glycosylation" value="12 sites, No reported glycans"/>
</dbReference>
<dbReference type="GlyGen" id="Q8BM96">
    <property type="glycosylation" value="12 sites"/>
</dbReference>
<dbReference type="iPTMnet" id="Q8BM96"/>
<dbReference type="PhosphoSitePlus" id="Q8BM96"/>
<dbReference type="PaxDb" id="10090-ENSMUSP00000023437"/>
<dbReference type="PeptideAtlas" id="Q8BM96"/>
<dbReference type="ProteomicsDB" id="282040"/>
<dbReference type="Antibodypedia" id="15851">
    <property type="antibodies" value="99 antibodies from 24 providers"/>
</dbReference>
<dbReference type="DNASU" id="239853"/>
<dbReference type="Ensembl" id="ENSMUST00000023437.5">
    <property type="protein sequence ID" value="ENSMUSP00000023437.5"/>
    <property type="gene ID" value="ENSMUSG00000022755.5"/>
</dbReference>
<dbReference type="GeneID" id="239853"/>
<dbReference type="KEGG" id="mmu:239853"/>
<dbReference type="UCSC" id="uc007zmw.1">
    <property type="organism name" value="mouse"/>
</dbReference>
<dbReference type="AGR" id="MGI:2441732"/>
<dbReference type="CTD" id="84873"/>
<dbReference type="MGI" id="MGI:2441732">
    <property type="gene designation" value="Adgrg7"/>
</dbReference>
<dbReference type="VEuPathDB" id="HostDB:ENSMUSG00000022755"/>
<dbReference type="eggNOG" id="KOG4193">
    <property type="taxonomic scope" value="Eukaryota"/>
</dbReference>
<dbReference type="GeneTree" id="ENSGT00940000159169"/>
<dbReference type="HOGENOM" id="CLU_370321_0_0_1"/>
<dbReference type="InParanoid" id="Q8BM96"/>
<dbReference type="OMA" id="DHITCRS"/>
<dbReference type="OrthoDB" id="1100386at2759"/>
<dbReference type="PhylomeDB" id="Q8BM96"/>
<dbReference type="TreeFam" id="TF351485"/>
<dbReference type="BioGRID-ORCS" id="239853">
    <property type="hits" value="3 hits in 76 CRISPR screens"/>
</dbReference>
<dbReference type="PRO" id="PR:Q8BM96"/>
<dbReference type="Proteomes" id="UP000000589">
    <property type="component" value="Chromosome 16"/>
</dbReference>
<dbReference type="RNAct" id="Q8BM96">
    <property type="molecule type" value="protein"/>
</dbReference>
<dbReference type="Bgee" id="ENSMUSG00000022755">
    <property type="expression patterns" value="Expressed in jejunum and 20 other cell types or tissues"/>
</dbReference>
<dbReference type="GO" id="GO:0016020">
    <property type="term" value="C:membrane"/>
    <property type="evidence" value="ECO:0007669"/>
    <property type="project" value="UniProtKB-SubCell"/>
</dbReference>
<dbReference type="GO" id="GO:0004930">
    <property type="term" value="F:G protein-coupled receptor activity"/>
    <property type="evidence" value="ECO:0007669"/>
    <property type="project" value="UniProtKB-KW"/>
</dbReference>
<dbReference type="GO" id="GO:0007166">
    <property type="term" value="P:cell surface receptor signaling pathway"/>
    <property type="evidence" value="ECO:0007669"/>
    <property type="project" value="InterPro"/>
</dbReference>
<dbReference type="CDD" id="cd15257">
    <property type="entry name" value="7tmB2_GPR128"/>
    <property type="match status" value="1"/>
</dbReference>
<dbReference type="FunFam" id="1.20.1070.10:FF:000256">
    <property type="entry name" value="Adhesion G protein-coupled receptor G7"/>
    <property type="match status" value="1"/>
</dbReference>
<dbReference type="FunFam" id="2.60.220.50:FF:000025">
    <property type="entry name" value="Adhesion G protein-coupled receptor G7"/>
    <property type="match status" value="1"/>
</dbReference>
<dbReference type="Gene3D" id="2.60.220.50">
    <property type="match status" value="1"/>
</dbReference>
<dbReference type="Gene3D" id="1.20.1070.10">
    <property type="entry name" value="Rhodopsin 7-helix transmembrane proteins"/>
    <property type="match status" value="1"/>
</dbReference>
<dbReference type="InterPro" id="IPR053066">
    <property type="entry name" value="ADGR_G7"/>
</dbReference>
<dbReference type="InterPro" id="IPR057244">
    <property type="entry name" value="GAIN_B"/>
</dbReference>
<dbReference type="InterPro" id="IPR046338">
    <property type="entry name" value="GAIN_dom_sf"/>
</dbReference>
<dbReference type="InterPro" id="IPR017981">
    <property type="entry name" value="GPCR_2-like_7TM"/>
</dbReference>
<dbReference type="InterPro" id="IPR000832">
    <property type="entry name" value="GPCR_2_secretin-like"/>
</dbReference>
<dbReference type="InterPro" id="IPR047938">
    <property type="entry name" value="GPR128_7tmB2"/>
</dbReference>
<dbReference type="InterPro" id="IPR053985">
    <property type="entry name" value="GPR128_GAIN_subdom_A"/>
</dbReference>
<dbReference type="InterPro" id="IPR053986">
    <property type="entry name" value="GPR128_GAIN_subdom_B"/>
</dbReference>
<dbReference type="InterPro" id="IPR053984">
    <property type="entry name" value="GPR128_N"/>
</dbReference>
<dbReference type="InterPro" id="IPR000203">
    <property type="entry name" value="GPS"/>
</dbReference>
<dbReference type="PANTHER" id="PTHR47767">
    <property type="entry name" value="ADHESION G PROTEIN-COUPLED RECEPTOR G7"/>
    <property type="match status" value="1"/>
</dbReference>
<dbReference type="PANTHER" id="PTHR47767:SF1">
    <property type="entry name" value="ADHESION G PROTEIN-COUPLED RECEPTOR G7"/>
    <property type="match status" value="1"/>
</dbReference>
<dbReference type="Pfam" id="PF00002">
    <property type="entry name" value="7tm_2"/>
    <property type="match status" value="1"/>
</dbReference>
<dbReference type="Pfam" id="PF22261">
    <property type="entry name" value="GPR128_GAIN_subdom_B"/>
    <property type="match status" value="1"/>
</dbReference>
<dbReference type="Pfam" id="PF22259">
    <property type="entry name" value="GPR128_GAIN_subdomA"/>
    <property type="match status" value="1"/>
</dbReference>
<dbReference type="Pfam" id="PF22257">
    <property type="entry name" value="GPR128_N"/>
    <property type="match status" value="1"/>
</dbReference>
<dbReference type="Pfam" id="PF01825">
    <property type="entry name" value="GPS"/>
    <property type="match status" value="1"/>
</dbReference>
<dbReference type="PRINTS" id="PR00249">
    <property type="entry name" value="GPCRSECRETIN"/>
</dbReference>
<dbReference type="SMART" id="SM00303">
    <property type="entry name" value="GPS"/>
    <property type="match status" value="1"/>
</dbReference>
<dbReference type="PROSITE" id="PS50261">
    <property type="entry name" value="G_PROTEIN_RECEP_F2_4"/>
    <property type="match status" value="1"/>
</dbReference>
<dbReference type="PROSITE" id="PS50221">
    <property type="entry name" value="GAIN_B"/>
    <property type="match status" value="1"/>
</dbReference>
<protein>
    <recommendedName>
        <fullName>Adhesion G-protein coupled receptor G7</fullName>
    </recommendedName>
    <alternativeName>
        <fullName>G-protein coupled receptor 128</fullName>
    </alternativeName>
</protein>
<feature type="signal peptide" evidence="1">
    <location>
        <begin position="1"/>
        <end position="26"/>
    </location>
</feature>
<feature type="chain" id="PRO_0000012904" description="Adhesion G-protein coupled receptor G7">
    <location>
        <begin position="27"/>
        <end position="785"/>
    </location>
</feature>
<feature type="topological domain" description="Extracellular" evidence="4">
    <location>
        <begin position="27"/>
        <end position="435"/>
    </location>
</feature>
<feature type="transmembrane region" description="Helical; Name=1" evidence="1">
    <location>
        <begin position="436"/>
        <end position="456"/>
    </location>
</feature>
<feature type="topological domain" description="Cytoplasmic" evidence="4">
    <location>
        <begin position="457"/>
        <end position="465"/>
    </location>
</feature>
<feature type="transmembrane region" description="Helical; Name=2" evidence="1">
    <location>
        <begin position="466"/>
        <end position="486"/>
    </location>
</feature>
<feature type="topological domain" description="Extracellular" evidence="4">
    <location>
        <begin position="487"/>
        <end position="523"/>
    </location>
</feature>
<feature type="transmembrane region" description="Helical; Name=3" evidence="1">
    <location>
        <begin position="524"/>
        <end position="544"/>
    </location>
</feature>
<feature type="topological domain" description="Cytoplasmic" evidence="4">
    <location>
        <begin position="545"/>
        <end position="561"/>
    </location>
</feature>
<feature type="transmembrane region" description="Helical; Name=4" evidence="1">
    <location>
        <begin position="562"/>
        <end position="582"/>
    </location>
</feature>
<feature type="topological domain" description="Extracellular" evidence="4">
    <location>
        <begin position="583"/>
        <end position="623"/>
    </location>
</feature>
<feature type="transmembrane region" description="Helical; Name=5" evidence="1">
    <location>
        <begin position="624"/>
        <end position="644"/>
    </location>
</feature>
<feature type="topological domain" description="Cytoplasmic" evidence="4">
    <location>
        <begin position="645"/>
        <end position="668"/>
    </location>
</feature>
<feature type="transmembrane region" description="Helical; Name=6" evidence="1">
    <location>
        <begin position="669"/>
        <end position="689"/>
    </location>
</feature>
<feature type="topological domain" description="Extracellular" evidence="4">
    <location>
        <begin position="690"/>
        <end position="694"/>
    </location>
</feature>
<feature type="transmembrane region" description="Helical; Name=7" evidence="1">
    <location>
        <begin position="695"/>
        <end position="715"/>
    </location>
</feature>
<feature type="topological domain" description="Cytoplasmic" evidence="4">
    <location>
        <begin position="716"/>
        <end position="785"/>
    </location>
</feature>
<feature type="domain" description="GAIN-B" evidence="2">
    <location>
        <begin position="271"/>
        <end position="425"/>
    </location>
</feature>
<feature type="region of interest" description="GPS" evidence="2">
    <location>
        <begin position="380"/>
        <end position="425"/>
    </location>
</feature>
<feature type="glycosylation site" description="N-linked (GlcNAc...) asparagine" evidence="1">
    <location>
        <position position="82"/>
    </location>
</feature>
<feature type="glycosylation site" description="N-linked (GlcNAc...) asparagine" evidence="1">
    <location>
        <position position="122"/>
    </location>
</feature>
<feature type="glycosylation site" description="N-linked (GlcNAc...) asparagine" evidence="1">
    <location>
        <position position="133"/>
    </location>
</feature>
<feature type="glycosylation site" description="N-linked (GlcNAc...) asparagine" evidence="1">
    <location>
        <position position="152"/>
    </location>
</feature>
<feature type="glycosylation site" description="N-linked (GlcNAc...) asparagine" evidence="1">
    <location>
        <position position="159"/>
    </location>
</feature>
<feature type="glycosylation site" description="N-linked (GlcNAc...) asparagine" evidence="1">
    <location>
        <position position="178"/>
    </location>
</feature>
<feature type="glycosylation site" description="N-linked (GlcNAc...) asparagine" evidence="1">
    <location>
        <position position="195"/>
    </location>
</feature>
<feature type="glycosylation site" description="N-linked (GlcNAc...) asparagine" evidence="1">
    <location>
        <position position="239"/>
    </location>
</feature>
<feature type="glycosylation site" description="N-linked (GlcNAc...) asparagine" evidence="1">
    <location>
        <position position="289"/>
    </location>
</feature>
<feature type="glycosylation site" description="N-linked (GlcNAc...) asparagine" evidence="1">
    <location>
        <position position="348"/>
    </location>
</feature>
<feature type="glycosylation site" description="N-linked (GlcNAc...) asparagine" evidence="1">
    <location>
        <position position="400"/>
    </location>
</feature>
<feature type="glycosylation site" description="N-linked (GlcNAc...) asparagine" evidence="1">
    <location>
        <position position="408"/>
    </location>
</feature>
<feature type="disulfide bond" evidence="2">
    <location>
        <begin position="380"/>
        <end position="407"/>
    </location>
</feature>
<feature type="disulfide bond" evidence="2">
    <location>
        <begin position="395"/>
        <end position="409"/>
    </location>
</feature>
<feature type="sequence conflict" description="In Ref. 1; BAC28377." evidence="4" ref="1">
    <original>L</original>
    <variation>F</variation>
    <location>
        <position position="295"/>
    </location>
</feature>